<organism>
    <name type="scientific">Listeria monocytogenes serotype 4b (strain F2365)</name>
    <dbReference type="NCBI Taxonomy" id="265669"/>
    <lineage>
        <taxon>Bacteria</taxon>
        <taxon>Bacillati</taxon>
        <taxon>Bacillota</taxon>
        <taxon>Bacilli</taxon>
        <taxon>Bacillales</taxon>
        <taxon>Listeriaceae</taxon>
        <taxon>Listeria</taxon>
    </lineage>
</organism>
<proteinExistence type="inferred from homology"/>
<feature type="chain" id="PRO_0000141307" description="Cobyric acid synthase">
    <location>
        <begin position="1"/>
        <end position="511"/>
    </location>
</feature>
<feature type="domain" description="GATase cobBQ-type" evidence="1">
    <location>
        <begin position="251"/>
        <end position="443"/>
    </location>
</feature>
<feature type="active site" description="Nucleophile" evidence="1">
    <location>
        <position position="332"/>
    </location>
</feature>
<feature type="active site" evidence="1">
    <location>
        <position position="435"/>
    </location>
</feature>
<keyword id="KW-0169">Cobalamin biosynthesis</keyword>
<keyword id="KW-0315">Glutamine amidotransferase</keyword>
<reference key="1">
    <citation type="journal article" date="2004" name="Nucleic Acids Res.">
        <title>Whole genome comparisons of serotype 4b and 1/2a strains of the food-borne pathogen Listeria monocytogenes reveal new insights into the core genome components of this species.</title>
        <authorList>
            <person name="Nelson K.E."/>
            <person name="Fouts D.E."/>
            <person name="Mongodin E.F."/>
            <person name="Ravel J."/>
            <person name="DeBoy R.T."/>
            <person name="Kolonay J.F."/>
            <person name="Rasko D.A."/>
            <person name="Angiuoli S.V."/>
            <person name="Gill S.R."/>
            <person name="Paulsen I.T."/>
            <person name="Peterson J.D."/>
            <person name="White O."/>
            <person name="Nelson W.C."/>
            <person name="Nierman W.C."/>
            <person name="Beanan M.J."/>
            <person name="Brinkac L.M."/>
            <person name="Daugherty S.C."/>
            <person name="Dodson R.J."/>
            <person name="Durkin A.S."/>
            <person name="Madupu R."/>
            <person name="Haft D.H."/>
            <person name="Selengut J."/>
            <person name="Van Aken S.E."/>
            <person name="Khouri H.M."/>
            <person name="Fedorova N."/>
            <person name="Forberger H.A."/>
            <person name="Tran B."/>
            <person name="Kathariou S."/>
            <person name="Wonderling L.D."/>
            <person name="Uhlich G.A."/>
            <person name="Bayles D.O."/>
            <person name="Luchansky J.B."/>
            <person name="Fraser C.M."/>
        </authorList>
    </citation>
    <scope>NUCLEOTIDE SEQUENCE [LARGE SCALE GENOMIC DNA]</scope>
    <source>
        <strain>F2365</strain>
    </source>
</reference>
<accession>Q720M1</accession>
<dbReference type="EMBL" id="AE017262">
    <property type="protein sequence ID" value="AAT03993.1"/>
    <property type="molecule type" value="Genomic_DNA"/>
</dbReference>
<dbReference type="RefSeq" id="WP_003734682.1">
    <property type="nucleotide sequence ID" value="NC_002973.6"/>
</dbReference>
<dbReference type="SMR" id="Q720M1"/>
<dbReference type="KEGG" id="lmf:LMOf2365_1217"/>
<dbReference type="HOGENOM" id="CLU_019250_2_2_9"/>
<dbReference type="UniPathway" id="UPA00148"/>
<dbReference type="GO" id="GO:0015420">
    <property type="term" value="F:ABC-type vitamin B12 transporter activity"/>
    <property type="evidence" value="ECO:0007669"/>
    <property type="project" value="UniProtKB-UniRule"/>
</dbReference>
<dbReference type="GO" id="GO:0003824">
    <property type="term" value="F:catalytic activity"/>
    <property type="evidence" value="ECO:0007669"/>
    <property type="project" value="InterPro"/>
</dbReference>
<dbReference type="GO" id="GO:0009236">
    <property type="term" value="P:cobalamin biosynthetic process"/>
    <property type="evidence" value="ECO:0007669"/>
    <property type="project" value="UniProtKB-UniRule"/>
</dbReference>
<dbReference type="CDD" id="cd05389">
    <property type="entry name" value="CobQ_N"/>
    <property type="match status" value="1"/>
</dbReference>
<dbReference type="CDD" id="cd01750">
    <property type="entry name" value="GATase1_CobQ"/>
    <property type="match status" value="1"/>
</dbReference>
<dbReference type="Gene3D" id="3.40.50.880">
    <property type="match status" value="1"/>
</dbReference>
<dbReference type="Gene3D" id="3.40.50.300">
    <property type="entry name" value="P-loop containing nucleotide triphosphate hydrolases"/>
    <property type="match status" value="1"/>
</dbReference>
<dbReference type="HAMAP" id="MF_00028">
    <property type="entry name" value="CobQ"/>
    <property type="match status" value="1"/>
</dbReference>
<dbReference type="InterPro" id="IPR029062">
    <property type="entry name" value="Class_I_gatase-like"/>
</dbReference>
<dbReference type="InterPro" id="IPR002586">
    <property type="entry name" value="CobQ/CobB/MinD/ParA_Nub-bd_dom"/>
</dbReference>
<dbReference type="InterPro" id="IPR033949">
    <property type="entry name" value="CobQ_GATase1"/>
</dbReference>
<dbReference type="InterPro" id="IPR047045">
    <property type="entry name" value="CobQ_N"/>
</dbReference>
<dbReference type="InterPro" id="IPR004459">
    <property type="entry name" value="CobQ_synth"/>
</dbReference>
<dbReference type="InterPro" id="IPR011698">
    <property type="entry name" value="GATase_3"/>
</dbReference>
<dbReference type="InterPro" id="IPR027417">
    <property type="entry name" value="P-loop_NTPase"/>
</dbReference>
<dbReference type="NCBIfam" id="TIGR00313">
    <property type="entry name" value="cobQ"/>
    <property type="match status" value="1"/>
</dbReference>
<dbReference type="NCBIfam" id="NF001989">
    <property type="entry name" value="PRK00784.1"/>
    <property type="match status" value="1"/>
</dbReference>
<dbReference type="PANTHER" id="PTHR21343:SF1">
    <property type="entry name" value="COBYRIC ACID SYNTHASE"/>
    <property type="match status" value="1"/>
</dbReference>
<dbReference type="PANTHER" id="PTHR21343">
    <property type="entry name" value="DETHIOBIOTIN SYNTHETASE"/>
    <property type="match status" value="1"/>
</dbReference>
<dbReference type="Pfam" id="PF01656">
    <property type="entry name" value="CbiA"/>
    <property type="match status" value="1"/>
</dbReference>
<dbReference type="Pfam" id="PF07685">
    <property type="entry name" value="GATase_3"/>
    <property type="match status" value="1"/>
</dbReference>
<dbReference type="SUPFAM" id="SSF52317">
    <property type="entry name" value="Class I glutamine amidotransferase-like"/>
    <property type="match status" value="1"/>
</dbReference>
<dbReference type="SUPFAM" id="SSF52540">
    <property type="entry name" value="P-loop containing nucleoside triphosphate hydrolases"/>
    <property type="match status" value="1"/>
</dbReference>
<dbReference type="PROSITE" id="PS51274">
    <property type="entry name" value="GATASE_COBBQ"/>
    <property type="match status" value="1"/>
</dbReference>
<evidence type="ECO:0000255" key="1">
    <source>
        <dbReference type="HAMAP-Rule" id="MF_00028"/>
    </source>
</evidence>
<name>COBQ_LISMF</name>
<gene>
    <name evidence="1" type="primary">cobQ</name>
    <name type="ordered locus">LMOf2365_1217</name>
</gene>
<protein>
    <recommendedName>
        <fullName evidence="1">Cobyric acid synthase</fullName>
    </recommendedName>
</protein>
<sequence>MVKQIMIQGTASDAGKSVLVAGLCRLFKNKGKRVVPFKSQNMSLNSFITATGDEMGRAQVFQAEAAGVFPDVRMNPVLLKPTNDRQSQVIFMGAILDNMDAVTYHDFKQTLIPKIQAVYQSLADENDIIVLEGAGSPAEINLNDRDIVNMGMAKMVDAPVVLVADIDKGGVFASIYGTIMLLNEEERARIKGVIINKFRGDVALLQPGIDMIEELTNVPVIGVIPYANLQLEEEDSVSLSGKNYVPDSNALLDIAIICLPRISNFTDFHSLEIQPEISLRYIRNLADFGKPDLVIIPGSKNTLEDMAFLEESGLKKAIQNFAENAGKVIGICGGYQMLGKKMLDPNQVESKQLEIAGLGLLDTETIFLDQKRTTQITGVTHSGEAVEGYEIHMGETKRGESTSPFCEIKAVNGNEETHQDGAISVNKNIIGTYIHGIFDNDVFLGNLFDELLTRKNKSVYPHEIINLKEHKEQEYDKLAALLEANIQMDQLEKIMKGEKICVSTQKPAIKE</sequence>
<comment type="function">
    <text evidence="1">Catalyzes amidations at positions B, D, E, and G on adenosylcobyrinic A,C-diamide. NH(2) groups are provided by glutamine, and one molecule of ATP is hydrogenolyzed for each amidation.</text>
</comment>
<comment type="pathway">
    <text evidence="1">Cofactor biosynthesis; adenosylcobalamin biosynthesis.</text>
</comment>
<comment type="similarity">
    <text evidence="1">Belongs to the CobB/CobQ family. CobQ subfamily.</text>
</comment>